<reference key="1">
    <citation type="journal article" date="2002" name="Nucleic Acids Res.">
        <title>Genome sequence of Oceanobacillus iheyensis isolated from the Iheya Ridge and its unexpected adaptive capabilities to extreme environments.</title>
        <authorList>
            <person name="Takami H."/>
            <person name="Takaki Y."/>
            <person name="Uchiyama I."/>
        </authorList>
    </citation>
    <scope>NUCLEOTIDE SEQUENCE [LARGE SCALE GENOMIC DNA]</scope>
    <source>
        <strain>DSM 14371 / CIP 107618 / JCM 11309 / KCTC 3954 / HTE831</strain>
    </source>
</reference>
<name>RIMM_OCEIH</name>
<sequence>MSGVKFNIGKIVNTHGIRGEVKVVRITDFEDRFDPGNTVYLQDNKEYKPLVIATHRVHKGFDLLQFKGYGNINEVEAFKGLMLSIDEDQLTDLEEDAYYYHEIVGCKVVTSEGEELGKVKEILSPGANDVWVVQRMNAKDLLIPYIEQVVKQVDIENKIIKVQLMEGMLD</sequence>
<feature type="chain" id="PRO_0000163326" description="Ribosome maturation factor RimM">
    <location>
        <begin position="1"/>
        <end position="170"/>
    </location>
</feature>
<feature type="domain" description="PRC barrel" evidence="1">
    <location>
        <begin position="95"/>
        <end position="168"/>
    </location>
</feature>
<gene>
    <name evidence="1" type="primary">rimM</name>
    <name type="ordered locus">OB1535</name>
</gene>
<protein>
    <recommendedName>
        <fullName evidence="1">Ribosome maturation factor RimM</fullName>
    </recommendedName>
</protein>
<organism>
    <name type="scientific">Oceanobacillus iheyensis (strain DSM 14371 / CIP 107618 / JCM 11309 / KCTC 3954 / HTE831)</name>
    <dbReference type="NCBI Taxonomy" id="221109"/>
    <lineage>
        <taxon>Bacteria</taxon>
        <taxon>Bacillati</taxon>
        <taxon>Bacillota</taxon>
        <taxon>Bacilli</taxon>
        <taxon>Bacillales</taxon>
        <taxon>Bacillaceae</taxon>
        <taxon>Oceanobacillus</taxon>
    </lineage>
</organism>
<dbReference type="EMBL" id="BA000028">
    <property type="protein sequence ID" value="BAC13491.1"/>
    <property type="molecule type" value="Genomic_DNA"/>
</dbReference>
<dbReference type="RefSeq" id="WP_011065935.1">
    <property type="nucleotide sequence ID" value="NC_004193.1"/>
</dbReference>
<dbReference type="SMR" id="Q8EQZ8"/>
<dbReference type="STRING" id="221109.gene:10733775"/>
<dbReference type="KEGG" id="oih:OB1535"/>
<dbReference type="eggNOG" id="COG0806">
    <property type="taxonomic scope" value="Bacteria"/>
</dbReference>
<dbReference type="HOGENOM" id="CLU_077636_3_1_9"/>
<dbReference type="OrthoDB" id="9810331at2"/>
<dbReference type="PhylomeDB" id="Q8EQZ8"/>
<dbReference type="Proteomes" id="UP000000822">
    <property type="component" value="Chromosome"/>
</dbReference>
<dbReference type="GO" id="GO:0005737">
    <property type="term" value="C:cytoplasm"/>
    <property type="evidence" value="ECO:0007669"/>
    <property type="project" value="UniProtKB-SubCell"/>
</dbReference>
<dbReference type="GO" id="GO:0005840">
    <property type="term" value="C:ribosome"/>
    <property type="evidence" value="ECO:0007669"/>
    <property type="project" value="InterPro"/>
</dbReference>
<dbReference type="GO" id="GO:0043022">
    <property type="term" value="F:ribosome binding"/>
    <property type="evidence" value="ECO:0007669"/>
    <property type="project" value="InterPro"/>
</dbReference>
<dbReference type="GO" id="GO:0042274">
    <property type="term" value="P:ribosomal small subunit biogenesis"/>
    <property type="evidence" value="ECO:0007669"/>
    <property type="project" value="UniProtKB-UniRule"/>
</dbReference>
<dbReference type="GO" id="GO:0006364">
    <property type="term" value="P:rRNA processing"/>
    <property type="evidence" value="ECO:0007669"/>
    <property type="project" value="UniProtKB-UniRule"/>
</dbReference>
<dbReference type="Gene3D" id="2.30.30.240">
    <property type="entry name" value="PRC-barrel domain"/>
    <property type="match status" value="1"/>
</dbReference>
<dbReference type="Gene3D" id="2.40.30.60">
    <property type="entry name" value="RimM"/>
    <property type="match status" value="1"/>
</dbReference>
<dbReference type="HAMAP" id="MF_00014">
    <property type="entry name" value="Ribosome_mat_RimM"/>
    <property type="match status" value="1"/>
</dbReference>
<dbReference type="InterPro" id="IPR027275">
    <property type="entry name" value="PRC-brl_dom"/>
</dbReference>
<dbReference type="InterPro" id="IPR011033">
    <property type="entry name" value="PRC_barrel-like_sf"/>
</dbReference>
<dbReference type="InterPro" id="IPR011961">
    <property type="entry name" value="RimM"/>
</dbReference>
<dbReference type="InterPro" id="IPR002676">
    <property type="entry name" value="RimM_N"/>
</dbReference>
<dbReference type="InterPro" id="IPR036976">
    <property type="entry name" value="RimM_N_sf"/>
</dbReference>
<dbReference type="InterPro" id="IPR009000">
    <property type="entry name" value="Transl_B-barrel_sf"/>
</dbReference>
<dbReference type="NCBIfam" id="TIGR02273">
    <property type="entry name" value="16S_RimM"/>
    <property type="match status" value="1"/>
</dbReference>
<dbReference type="PANTHER" id="PTHR33692">
    <property type="entry name" value="RIBOSOME MATURATION FACTOR RIMM"/>
    <property type="match status" value="1"/>
</dbReference>
<dbReference type="PANTHER" id="PTHR33692:SF1">
    <property type="entry name" value="RIBOSOME MATURATION FACTOR RIMM"/>
    <property type="match status" value="1"/>
</dbReference>
<dbReference type="Pfam" id="PF05239">
    <property type="entry name" value="PRC"/>
    <property type="match status" value="1"/>
</dbReference>
<dbReference type="Pfam" id="PF01782">
    <property type="entry name" value="RimM"/>
    <property type="match status" value="1"/>
</dbReference>
<dbReference type="SUPFAM" id="SSF50346">
    <property type="entry name" value="PRC-barrel domain"/>
    <property type="match status" value="1"/>
</dbReference>
<dbReference type="SUPFAM" id="SSF50447">
    <property type="entry name" value="Translation proteins"/>
    <property type="match status" value="1"/>
</dbReference>
<evidence type="ECO:0000255" key="1">
    <source>
        <dbReference type="HAMAP-Rule" id="MF_00014"/>
    </source>
</evidence>
<accession>Q8EQZ8</accession>
<proteinExistence type="inferred from homology"/>
<comment type="function">
    <text evidence="1">An accessory protein needed during the final step in the assembly of 30S ribosomal subunit, possibly for assembly of the head region. Essential for efficient processing of 16S rRNA. May be needed both before and after RbfA during the maturation of 16S rRNA. It has affinity for free ribosomal 30S subunits but not for 70S ribosomes.</text>
</comment>
<comment type="subunit">
    <text evidence="1">Binds ribosomal protein uS19.</text>
</comment>
<comment type="subcellular location">
    <subcellularLocation>
        <location evidence="1">Cytoplasm</location>
    </subcellularLocation>
</comment>
<comment type="domain">
    <text evidence="1">The PRC barrel domain binds ribosomal protein uS19.</text>
</comment>
<comment type="similarity">
    <text evidence="1">Belongs to the RimM family.</text>
</comment>
<keyword id="KW-0143">Chaperone</keyword>
<keyword id="KW-0963">Cytoplasm</keyword>
<keyword id="KW-1185">Reference proteome</keyword>
<keyword id="KW-0690">Ribosome biogenesis</keyword>
<keyword id="KW-0698">rRNA processing</keyword>